<comment type="function">
    <text evidence="1">Catalyzes the radical-mediated insertion of two sulfur atoms into the C-6 and C-8 positions of the octanoyl moiety bound to the lipoyl domains of lipoate-dependent enzymes, thereby converting the octanoylated domains into lipoylated derivatives.</text>
</comment>
<comment type="catalytic activity">
    <reaction evidence="1">
        <text>[[Fe-S] cluster scaffold protein carrying a second [4Fe-4S](2+) cluster] + N(6)-octanoyl-L-lysyl-[protein] + 2 oxidized [2Fe-2S]-[ferredoxin] + 2 S-adenosyl-L-methionine + 4 H(+) = [[Fe-S] cluster scaffold protein] + N(6)-[(R)-dihydrolipoyl]-L-lysyl-[protein] + 4 Fe(3+) + 2 hydrogen sulfide + 2 5'-deoxyadenosine + 2 L-methionine + 2 reduced [2Fe-2S]-[ferredoxin]</text>
        <dbReference type="Rhea" id="RHEA:16585"/>
        <dbReference type="Rhea" id="RHEA-COMP:9928"/>
        <dbReference type="Rhea" id="RHEA-COMP:10000"/>
        <dbReference type="Rhea" id="RHEA-COMP:10001"/>
        <dbReference type="Rhea" id="RHEA-COMP:10475"/>
        <dbReference type="Rhea" id="RHEA-COMP:14568"/>
        <dbReference type="Rhea" id="RHEA-COMP:14569"/>
        <dbReference type="ChEBI" id="CHEBI:15378"/>
        <dbReference type="ChEBI" id="CHEBI:17319"/>
        <dbReference type="ChEBI" id="CHEBI:29034"/>
        <dbReference type="ChEBI" id="CHEBI:29919"/>
        <dbReference type="ChEBI" id="CHEBI:33722"/>
        <dbReference type="ChEBI" id="CHEBI:33737"/>
        <dbReference type="ChEBI" id="CHEBI:33738"/>
        <dbReference type="ChEBI" id="CHEBI:57844"/>
        <dbReference type="ChEBI" id="CHEBI:59789"/>
        <dbReference type="ChEBI" id="CHEBI:78809"/>
        <dbReference type="ChEBI" id="CHEBI:83100"/>
        <dbReference type="EC" id="2.8.1.8"/>
    </reaction>
</comment>
<comment type="cofactor">
    <cofactor evidence="1">
        <name>[4Fe-4S] cluster</name>
        <dbReference type="ChEBI" id="CHEBI:49883"/>
    </cofactor>
    <text evidence="1">Binds 2 [4Fe-4S] clusters per subunit. One cluster is coordinated with 3 cysteines and an exchangeable S-adenosyl-L-methionine.</text>
</comment>
<comment type="pathway">
    <text evidence="1">Protein modification; protein lipoylation via endogenous pathway; protein N(6)-(lipoyl)lysine from octanoyl-[acyl-carrier-protein].</text>
</comment>
<comment type="subcellular location">
    <subcellularLocation>
        <location evidence="1">Cytoplasm</location>
    </subcellularLocation>
</comment>
<comment type="similarity">
    <text evidence="1">Belongs to the radical SAM superfamily. Lipoyl synthase family.</text>
</comment>
<proteinExistence type="inferred from homology"/>
<evidence type="ECO:0000255" key="1">
    <source>
        <dbReference type="HAMAP-Rule" id="MF_00206"/>
    </source>
</evidence>
<evidence type="ECO:0000255" key="2">
    <source>
        <dbReference type="PROSITE-ProRule" id="PRU01266"/>
    </source>
</evidence>
<evidence type="ECO:0000256" key="3">
    <source>
        <dbReference type="SAM" id="MobiDB-lite"/>
    </source>
</evidence>
<accession>Q2YWR5</accession>
<dbReference type="EC" id="2.8.1.8" evidence="1"/>
<dbReference type="EMBL" id="AJ938182">
    <property type="protein sequence ID" value="CAI80479.1"/>
    <property type="molecule type" value="Genomic_DNA"/>
</dbReference>
<dbReference type="RefSeq" id="WP_000201878.1">
    <property type="nucleotide sequence ID" value="NC_007622.1"/>
</dbReference>
<dbReference type="SMR" id="Q2YWR5"/>
<dbReference type="KEGG" id="sab:SAB0791"/>
<dbReference type="HOGENOM" id="CLU_033144_2_1_9"/>
<dbReference type="GO" id="GO:0005737">
    <property type="term" value="C:cytoplasm"/>
    <property type="evidence" value="ECO:0007669"/>
    <property type="project" value="UniProtKB-SubCell"/>
</dbReference>
<dbReference type="GO" id="GO:0051539">
    <property type="term" value="F:4 iron, 4 sulfur cluster binding"/>
    <property type="evidence" value="ECO:0007669"/>
    <property type="project" value="UniProtKB-UniRule"/>
</dbReference>
<dbReference type="GO" id="GO:0016992">
    <property type="term" value="F:lipoate synthase activity"/>
    <property type="evidence" value="ECO:0007669"/>
    <property type="project" value="UniProtKB-UniRule"/>
</dbReference>
<dbReference type="GO" id="GO:0046872">
    <property type="term" value="F:metal ion binding"/>
    <property type="evidence" value="ECO:0007669"/>
    <property type="project" value="UniProtKB-KW"/>
</dbReference>
<dbReference type="CDD" id="cd01335">
    <property type="entry name" value="Radical_SAM"/>
    <property type="match status" value="1"/>
</dbReference>
<dbReference type="FunFam" id="3.20.20.70:FF:000040">
    <property type="entry name" value="Lipoyl synthase"/>
    <property type="match status" value="1"/>
</dbReference>
<dbReference type="Gene3D" id="3.20.20.70">
    <property type="entry name" value="Aldolase class I"/>
    <property type="match status" value="1"/>
</dbReference>
<dbReference type="HAMAP" id="MF_00206">
    <property type="entry name" value="Lipoyl_synth"/>
    <property type="match status" value="1"/>
</dbReference>
<dbReference type="InterPro" id="IPR013785">
    <property type="entry name" value="Aldolase_TIM"/>
</dbReference>
<dbReference type="InterPro" id="IPR006638">
    <property type="entry name" value="Elp3/MiaA/NifB-like_rSAM"/>
</dbReference>
<dbReference type="InterPro" id="IPR031691">
    <property type="entry name" value="LIAS_N"/>
</dbReference>
<dbReference type="InterPro" id="IPR003698">
    <property type="entry name" value="Lipoyl_synth"/>
</dbReference>
<dbReference type="InterPro" id="IPR007197">
    <property type="entry name" value="rSAM"/>
</dbReference>
<dbReference type="NCBIfam" id="TIGR00510">
    <property type="entry name" value="lipA"/>
    <property type="match status" value="1"/>
</dbReference>
<dbReference type="NCBIfam" id="NF004019">
    <property type="entry name" value="PRK05481.1"/>
    <property type="match status" value="1"/>
</dbReference>
<dbReference type="NCBIfam" id="NF009544">
    <property type="entry name" value="PRK12928.1"/>
    <property type="match status" value="1"/>
</dbReference>
<dbReference type="PANTHER" id="PTHR10949">
    <property type="entry name" value="LIPOYL SYNTHASE"/>
    <property type="match status" value="1"/>
</dbReference>
<dbReference type="PANTHER" id="PTHR10949:SF0">
    <property type="entry name" value="LIPOYL SYNTHASE, MITOCHONDRIAL"/>
    <property type="match status" value="1"/>
</dbReference>
<dbReference type="Pfam" id="PF16881">
    <property type="entry name" value="LIAS_N"/>
    <property type="match status" value="1"/>
</dbReference>
<dbReference type="Pfam" id="PF04055">
    <property type="entry name" value="Radical_SAM"/>
    <property type="match status" value="1"/>
</dbReference>
<dbReference type="PIRSF" id="PIRSF005963">
    <property type="entry name" value="Lipoyl_synth"/>
    <property type="match status" value="1"/>
</dbReference>
<dbReference type="SFLD" id="SFLDF00271">
    <property type="entry name" value="lipoyl_synthase"/>
    <property type="match status" value="1"/>
</dbReference>
<dbReference type="SFLD" id="SFLDS00029">
    <property type="entry name" value="Radical_SAM"/>
    <property type="match status" value="1"/>
</dbReference>
<dbReference type="SMART" id="SM00729">
    <property type="entry name" value="Elp3"/>
    <property type="match status" value="1"/>
</dbReference>
<dbReference type="SUPFAM" id="SSF102114">
    <property type="entry name" value="Radical SAM enzymes"/>
    <property type="match status" value="1"/>
</dbReference>
<dbReference type="PROSITE" id="PS51918">
    <property type="entry name" value="RADICAL_SAM"/>
    <property type="match status" value="1"/>
</dbReference>
<reference key="1">
    <citation type="journal article" date="2007" name="PLoS ONE">
        <title>Molecular correlates of host specialization in Staphylococcus aureus.</title>
        <authorList>
            <person name="Herron-Olson L."/>
            <person name="Fitzgerald J.R."/>
            <person name="Musser J.M."/>
            <person name="Kapur V."/>
        </authorList>
    </citation>
    <scope>NUCLEOTIDE SEQUENCE [LARGE SCALE GENOMIC DNA]</scope>
    <source>
        <strain>bovine RF122 / ET3-1</strain>
    </source>
</reference>
<organism>
    <name type="scientific">Staphylococcus aureus (strain bovine RF122 / ET3-1)</name>
    <dbReference type="NCBI Taxonomy" id="273036"/>
    <lineage>
        <taxon>Bacteria</taxon>
        <taxon>Bacillati</taxon>
        <taxon>Bacillota</taxon>
        <taxon>Bacilli</taxon>
        <taxon>Bacillales</taxon>
        <taxon>Staphylococcaceae</taxon>
        <taxon>Staphylococcus</taxon>
    </lineage>
</organism>
<protein>
    <recommendedName>
        <fullName evidence="1">Lipoyl synthase</fullName>
        <ecNumber evidence="1">2.8.1.8</ecNumber>
    </recommendedName>
    <alternativeName>
        <fullName evidence="1">Lip-syn</fullName>
        <shortName evidence="1">LS</shortName>
    </alternativeName>
    <alternativeName>
        <fullName evidence="1">Lipoate synthase</fullName>
    </alternativeName>
    <alternativeName>
        <fullName evidence="1">Lipoic acid synthase</fullName>
    </alternativeName>
    <alternativeName>
        <fullName evidence="1">Sulfur insertion protein LipA</fullName>
    </alternativeName>
</protein>
<name>LIPA_STAAB</name>
<sequence length="305" mass="34884">MATKNEEILRKPDWLKIKLNTNENYTGLKKMMRKKNLNTVCEEAKCPNIHECWGARRTATFMILGAVCTRACRFCAVKTGLPNELDLNEPERVAESVELMNLKHVVITAVARDDLRDAGSNVYAETVRKVRERNPFTTIEILPSDMGGDYDALETLMASRPDILNHNIETVRRLTPRVRARATYDRTLEFLRRSKELQPDIPTKSSIMVGLGETIEEIYETMDDLRANDVDILTIGQYLQPSRKHLKVQKYYTPLEFGKLRKVAMDKGFKHCQAGPLVRSSYHADEQVNEAAKEKQRQGEAQLNS</sequence>
<feature type="chain" id="PRO_1000012290" description="Lipoyl synthase">
    <location>
        <begin position="1"/>
        <end position="305"/>
    </location>
</feature>
<feature type="domain" description="Radical SAM core" evidence="2">
    <location>
        <begin position="54"/>
        <end position="270"/>
    </location>
</feature>
<feature type="region of interest" description="Disordered" evidence="3">
    <location>
        <begin position="283"/>
        <end position="305"/>
    </location>
</feature>
<feature type="compositionally biased region" description="Basic and acidic residues" evidence="3">
    <location>
        <begin position="283"/>
        <end position="298"/>
    </location>
</feature>
<feature type="binding site" evidence="1">
    <location>
        <position position="41"/>
    </location>
    <ligand>
        <name>[4Fe-4S] cluster</name>
        <dbReference type="ChEBI" id="CHEBI:49883"/>
        <label>1</label>
    </ligand>
</feature>
<feature type="binding site" evidence="1">
    <location>
        <position position="46"/>
    </location>
    <ligand>
        <name>[4Fe-4S] cluster</name>
        <dbReference type="ChEBI" id="CHEBI:49883"/>
        <label>1</label>
    </ligand>
</feature>
<feature type="binding site" evidence="1">
    <location>
        <position position="52"/>
    </location>
    <ligand>
        <name>[4Fe-4S] cluster</name>
        <dbReference type="ChEBI" id="CHEBI:49883"/>
        <label>1</label>
    </ligand>
</feature>
<feature type="binding site" evidence="1">
    <location>
        <position position="68"/>
    </location>
    <ligand>
        <name>[4Fe-4S] cluster</name>
        <dbReference type="ChEBI" id="CHEBI:49883"/>
        <label>2</label>
        <note>4Fe-4S-S-AdoMet</note>
    </ligand>
</feature>
<feature type="binding site" evidence="1">
    <location>
        <position position="72"/>
    </location>
    <ligand>
        <name>[4Fe-4S] cluster</name>
        <dbReference type="ChEBI" id="CHEBI:49883"/>
        <label>2</label>
        <note>4Fe-4S-S-AdoMet</note>
    </ligand>
</feature>
<feature type="binding site" evidence="1">
    <location>
        <position position="75"/>
    </location>
    <ligand>
        <name>[4Fe-4S] cluster</name>
        <dbReference type="ChEBI" id="CHEBI:49883"/>
        <label>2</label>
        <note>4Fe-4S-S-AdoMet</note>
    </ligand>
</feature>
<feature type="binding site" evidence="1">
    <location>
        <position position="281"/>
    </location>
    <ligand>
        <name>[4Fe-4S] cluster</name>
        <dbReference type="ChEBI" id="CHEBI:49883"/>
        <label>1</label>
    </ligand>
</feature>
<keyword id="KW-0004">4Fe-4S</keyword>
<keyword id="KW-0963">Cytoplasm</keyword>
<keyword id="KW-0408">Iron</keyword>
<keyword id="KW-0411">Iron-sulfur</keyword>
<keyword id="KW-0479">Metal-binding</keyword>
<keyword id="KW-0949">S-adenosyl-L-methionine</keyword>
<keyword id="KW-0808">Transferase</keyword>
<gene>
    <name evidence="1" type="primary">lipA</name>
    <name type="ordered locus">SAB0791</name>
</gene>